<name>RRF_METPB</name>
<accession>B1ZLC8</accession>
<keyword id="KW-0963">Cytoplasm</keyword>
<keyword id="KW-0648">Protein biosynthesis</keyword>
<organism>
    <name type="scientific">Methylorubrum populi (strain ATCC BAA-705 / NCIMB 13946 / BJ001)</name>
    <name type="common">Methylobacterium populi</name>
    <dbReference type="NCBI Taxonomy" id="441620"/>
    <lineage>
        <taxon>Bacteria</taxon>
        <taxon>Pseudomonadati</taxon>
        <taxon>Pseudomonadota</taxon>
        <taxon>Alphaproteobacteria</taxon>
        <taxon>Hyphomicrobiales</taxon>
        <taxon>Methylobacteriaceae</taxon>
        <taxon>Methylorubrum</taxon>
    </lineage>
</organism>
<sequence length="187" mass="20784">MATPEFDLGDIKRRMQGAVSSLSKDLGSLRTGRATPSLLDPIQVEAYGASMPMAQVATVSVPEPRLLSISVWDRSMVTNVEKAIRESDLGLNPMTEGQTIRLRIPEMNEQRRKEMVKVAHKYTEEARVAVRHVRRDGLDILKKLEKDGAISEDDEKRQAGEVQKATDDAIAEIDGVLASKEKEIMQV</sequence>
<feature type="chain" id="PRO_1000090759" description="Ribosome-recycling factor">
    <location>
        <begin position="1"/>
        <end position="187"/>
    </location>
</feature>
<evidence type="ECO:0000255" key="1">
    <source>
        <dbReference type="HAMAP-Rule" id="MF_00040"/>
    </source>
</evidence>
<reference key="1">
    <citation type="submission" date="2008-04" db="EMBL/GenBank/DDBJ databases">
        <title>Complete sequence of chromosome of Methylobacterium populi BJ001.</title>
        <authorList>
            <consortium name="US DOE Joint Genome Institute"/>
            <person name="Copeland A."/>
            <person name="Lucas S."/>
            <person name="Lapidus A."/>
            <person name="Glavina del Rio T."/>
            <person name="Dalin E."/>
            <person name="Tice H."/>
            <person name="Bruce D."/>
            <person name="Goodwin L."/>
            <person name="Pitluck S."/>
            <person name="Chertkov O."/>
            <person name="Brettin T."/>
            <person name="Detter J.C."/>
            <person name="Han C."/>
            <person name="Kuske C.R."/>
            <person name="Schmutz J."/>
            <person name="Larimer F."/>
            <person name="Land M."/>
            <person name="Hauser L."/>
            <person name="Kyrpides N."/>
            <person name="Mikhailova N."/>
            <person name="Marx C."/>
            <person name="Richardson P."/>
        </authorList>
    </citation>
    <scope>NUCLEOTIDE SEQUENCE [LARGE SCALE GENOMIC DNA]</scope>
    <source>
        <strain>ATCC BAA-705 / NCIMB 13946 / BJ001</strain>
    </source>
</reference>
<proteinExistence type="inferred from homology"/>
<dbReference type="EMBL" id="CP001029">
    <property type="protein sequence ID" value="ACB80209.1"/>
    <property type="molecule type" value="Genomic_DNA"/>
</dbReference>
<dbReference type="RefSeq" id="WP_012453953.1">
    <property type="nucleotide sequence ID" value="NC_010725.1"/>
</dbReference>
<dbReference type="SMR" id="B1ZLC8"/>
<dbReference type="STRING" id="441620.Mpop_2046"/>
<dbReference type="KEGG" id="mpo:Mpop_2046"/>
<dbReference type="eggNOG" id="COG0233">
    <property type="taxonomic scope" value="Bacteria"/>
</dbReference>
<dbReference type="HOGENOM" id="CLU_073981_2_0_5"/>
<dbReference type="OrthoDB" id="9804006at2"/>
<dbReference type="Proteomes" id="UP000007136">
    <property type="component" value="Chromosome"/>
</dbReference>
<dbReference type="GO" id="GO:0005829">
    <property type="term" value="C:cytosol"/>
    <property type="evidence" value="ECO:0007669"/>
    <property type="project" value="GOC"/>
</dbReference>
<dbReference type="GO" id="GO:0043023">
    <property type="term" value="F:ribosomal large subunit binding"/>
    <property type="evidence" value="ECO:0007669"/>
    <property type="project" value="TreeGrafter"/>
</dbReference>
<dbReference type="GO" id="GO:0002184">
    <property type="term" value="P:cytoplasmic translational termination"/>
    <property type="evidence" value="ECO:0007669"/>
    <property type="project" value="TreeGrafter"/>
</dbReference>
<dbReference type="CDD" id="cd00520">
    <property type="entry name" value="RRF"/>
    <property type="match status" value="1"/>
</dbReference>
<dbReference type="FunFam" id="1.10.132.20:FF:000001">
    <property type="entry name" value="Ribosome-recycling factor"/>
    <property type="match status" value="1"/>
</dbReference>
<dbReference type="FunFam" id="3.30.1360.40:FF:000001">
    <property type="entry name" value="Ribosome-recycling factor"/>
    <property type="match status" value="1"/>
</dbReference>
<dbReference type="Gene3D" id="3.30.1360.40">
    <property type="match status" value="1"/>
</dbReference>
<dbReference type="Gene3D" id="1.10.132.20">
    <property type="entry name" value="Ribosome-recycling factor"/>
    <property type="match status" value="1"/>
</dbReference>
<dbReference type="HAMAP" id="MF_00040">
    <property type="entry name" value="RRF"/>
    <property type="match status" value="1"/>
</dbReference>
<dbReference type="InterPro" id="IPR002661">
    <property type="entry name" value="Ribosome_recyc_fac"/>
</dbReference>
<dbReference type="InterPro" id="IPR023584">
    <property type="entry name" value="Ribosome_recyc_fac_dom"/>
</dbReference>
<dbReference type="InterPro" id="IPR036191">
    <property type="entry name" value="RRF_sf"/>
</dbReference>
<dbReference type="NCBIfam" id="TIGR00496">
    <property type="entry name" value="frr"/>
    <property type="match status" value="1"/>
</dbReference>
<dbReference type="PANTHER" id="PTHR20982:SF3">
    <property type="entry name" value="MITOCHONDRIAL RIBOSOME RECYCLING FACTOR PSEUDO 1"/>
    <property type="match status" value="1"/>
</dbReference>
<dbReference type="PANTHER" id="PTHR20982">
    <property type="entry name" value="RIBOSOME RECYCLING FACTOR"/>
    <property type="match status" value="1"/>
</dbReference>
<dbReference type="Pfam" id="PF01765">
    <property type="entry name" value="RRF"/>
    <property type="match status" value="1"/>
</dbReference>
<dbReference type="SUPFAM" id="SSF55194">
    <property type="entry name" value="Ribosome recycling factor, RRF"/>
    <property type="match status" value="1"/>
</dbReference>
<protein>
    <recommendedName>
        <fullName evidence="1">Ribosome-recycling factor</fullName>
        <shortName evidence="1">RRF</shortName>
    </recommendedName>
    <alternativeName>
        <fullName evidence="1">Ribosome-releasing factor</fullName>
    </alternativeName>
</protein>
<comment type="function">
    <text evidence="1">Responsible for the release of ribosomes from messenger RNA at the termination of protein biosynthesis. May increase the efficiency of translation by recycling ribosomes from one round of translation to another.</text>
</comment>
<comment type="subcellular location">
    <subcellularLocation>
        <location evidence="1">Cytoplasm</location>
    </subcellularLocation>
</comment>
<comment type="similarity">
    <text evidence="1">Belongs to the RRF family.</text>
</comment>
<gene>
    <name evidence="1" type="primary">frr</name>
    <name type="ordered locus">Mpop_2046</name>
</gene>